<gene>
    <name type="primary">hpaA</name>
</gene>
<comment type="subcellular location">
    <subcellularLocation>
        <location evidence="3">Cell outer membrane</location>
        <topology evidence="3">Lipid-anchor</topology>
    </subcellularLocation>
</comment>
<dbReference type="EMBL" id="U35455">
    <property type="protein sequence ID" value="AAA79096.1"/>
    <property type="molecule type" value="Genomic_DNA"/>
</dbReference>
<dbReference type="SMR" id="Q48254"/>
<dbReference type="GO" id="GO:0009279">
    <property type="term" value="C:cell outer membrane"/>
    <property type="evidence" value="ECO:0007669"/>
    <property type="project" value="UniProtKB-SubCell"/>
</dbReference>
<dbReference type="Gene3D" id="3.30.160.180">
    <property type="entry name" value="Putative neuraminyllactose-binding hemagglutinin homolog like domain"/>
    <property type="match status" value="1"/>
</dbReference>
<dbReference type="InterPro" id="IPR007876">
    <property type="entry name" value="NeuraminylLac-bd_hemagglutn"/>
</dbReference>
<dbReference type="InterPro" id="IPR038531">
    <property type="entry name" value="NeuraminylLac-bd_hemagglutn_sf"/>
</dbReference>
<dbReference type="Pfam" id="PF05211">
    <property type="entry name" value="NLBH"/>
    <property type="match status" value="1"/>
</dbReference>
<dbReference type="PIRSF" id="PIRSF019714">
    <property type="entry name" value="Neuraminyllac-bd_haemagglutn"/>
    <property type="match status" value="1"/>
</dbReference>
<dbReference type="SUPFAM" id="SSF159594">
    <property type="entry name" value="XCC0632-like"/>
    <property type="match status" value="1"/>
</dbReference>
<dbReference type="PROSITE" id="PS51257">
    <property type="entry name" value="PROKAR_LIPOPROTEIN"/>
    <property type="match status" value="1"/>
</dbReference>
<reference key="1">
    <citation type="journal article" date="1995" name="J. Bacteriol.">
        <title>The putative neuraminyllactose-binding hemagglutinin HpaA of Helicobacter pylori CCUG 17874 is a lipoprotein.</title>
        <authorList>
            <person name="O'Toole P.W."/>
            <person name="Janzon L."/>
            <person name="Doig P."/>
            <person name="Huang J."/>
            <person name="Kostrzynska M."/>
            <person name="Trust T.J."/>
        </authorList>
    </citation>
    <scope>NUCLEOTIDE SEQUENCE [GENOMIC DNA]</scope>
    <source>
        <strain>DSM 4867 / CCUG 17874 / NCTC 11638</strain>
    </source>
</reference>
<accession>Q48254</accession>
<feature type="signal peptide" evidence="2">
    <location>
        <begin position="1"/>
        <end position="27"/>
    </location>
</feature>
<feature type="chain" id="PRO_0000018102" description="Neuraminyllactose-binding hemagglutinin">
    <location>
        <begin position="28"/>
        <end position="260"/>
    </location>
</feature>
<feature type="region of interest" description="N-acetyl-neuraminyl-alpha(2,3)-lactose binding motif" evidence="1">
    <location>
        <begin position="134"/>
        <end position="139"/>
    </location>
</feature>
<feature type="lipid moiety-binding region" description="N-palmitoyl cysteine" evidence="3">
    <location>
        <position position="28"/>
    </location>
</feature>
<feature type="lipid moiety-binding region" description="S-diacylglycerol cysteine" evidence="3">
    <location>
        <position position="28"/>
    </location>
</feature>
<keyword id="KW-0998">Cell outer membrane</keyword>
<keyword id="KW-0449">Lipoprotein</keyword>
<keyword id="KW-0472">Membrane</keyword>
<keyword id="KW-0564">Palmitate</keyword>
<keyword id="KW-0732">Signal</keyword>
<protein>
    <recommendedName>
        <fullName>Neuraminyllactose-binding hemagglutinin</fullName>
    </recommendedName>
    <alternativeName>
        <fullName>Flagellar sheath adhesin</fullName>
    </alternativeName>
    <alternativeName>
        <fullName>N-acetylneuraminyllactose-binding fibrillar hemagglutinin receptor-binding subunit</fullName>
        <shortName>NLBH</shortName>
    </alternativeName>
</protein>
<proteinExistence type="inferred from homology"/>
<organism>
    <name type="scientific">Helicobacter pylori</name>
    <name type="common">Campylobacter pylori</name>
    <dbReference type="NCBI Taxonomy" id="210"/>
    <lineage>
        <taxon>Bacteria</taxon>
        <taxon>Pseudomonadati</taxon>
        <taxon>Campylobacterota</taxon>
        <taxon>Epsilonproteobacteria</taxon>
        <taxon>Campylobacterales</taxon>
        <taxon>Helicobacteraceae</taxon>
        <taxon>Helicobacter</taxon>
    </lineage>
</organism>
<sequence>MKTNGHFKDFAWKKCLLGASVGALLVGCSPHIIETNEVALKLNYHPASEKVQALDEKILLLRPAFQYSDNIAKEYENKFKNQTVLKVEQILQNQGYKVINVDSSDKDDFSFAQKKEGYLAVAMNGEIVLRPDPKRTIQKKSEPGLLFSTGLDKMEGVLIPAGFVKVTILEPMSGESLDSFTMDLSELDIQEKFLKTTHSSHSGGLVSTMVKGTDNSNDAIKSALNKIFGSIMQEIDKKLTQKNLESYQKDAKELKGKRNR</sequence>
<name>HPAA2_HELPX</name>
<evidence type="ECO:0000255" key="1"/>
<evidence type="ECO:0000255" key="2">
    <source>
        <dbReference type="PROSITE-ProRule" id="PRU00303"/>
    </source>
</evidence>
<evidence type="ECO:0000305" key="3"/>